<reference key="1">
    <citation type="submission" date="2005-01" db="EMBL/GenBank/DDBJ databases">
        <title>Positional cloning of rat hd.</title>
        <authorList>
            <person name="Liska F."/>
            <person name="Blachut S."/>
            <person name="Gosele C."/>
            <person name="Kren V."/>
            <person name="Krenova D."/>
            <person name="Hubner N."/>
        </authorList>
    </citation>
    <scope>NUCLEOTIDE SEQUENCE [MRNA]</scope>
    <source>
        <strain>Brown Norway/Cub</strain>
        <strain>SHR/OlaIpcv</strain>
        <strain>SHRSP</strain>
        <strain>Wistar Hd</strain>
        <strain>Wistar Kyoto</strain>
        <tissue>Testis</tissue>
    </source>
</reference>
<organism>
    <name type="scientific">Rattus norvegicus</name>
    <name type="common">Rat</name>
    <dbReference type="NCBI Taxonomy" id="10116"/>
    <lineage>
        <taxon>Eukaryota</taxon>
        <taxon>Metazoa</taxon>
        <taxon>Chordata</taxon>
        <taxon>Craniata</taxon>
        <taxon>Vertebrata</taxon>
        <taxon>Euteleostomi</taxon>
        <taxon>Mammalia</taxon>
        <taxon>Eutheria</taxon>
        <taxon>Euarchontoglires</taxon>
        <taxon>Glires</taxon>
        <taxon>Rodentia</taxon>
        <taxon>Myomorpha</taxon>
        <taxon>Muroidea</taxon>
        <taxon>Muridae</taxon>
        <taxon>Murinae</taxon>
        <taxon>Rattus</taxon>
    </lineage>
</organism>
<keyword id="KW-0256">Endoplasmic reticulum</keyword>
<keyword id="KW-0931">ER-Golgi transport</keyword>
<keyword id="KW-0333">Golgi apparatus</keyword>
<keyword id="KW-1185">Reference proteome</keyword>
<keyword id="KW-0813">Transport</keyword>
<comment type="function">
    <text evidence="1">May play a role in vesicular transport from endoplasmic reticulum to Golgi.</text>
</comment>
<comment type="subunit">
    <text evidence="2">Part of the multisubunit transport protein particle (TRAPP) complex. The heterodimer TRAPPC6B-TRAPPC3 interacts with TRAPPC1 likely providing a core for TRAPP complex formation.</text>
</comment>
<comment type="subcellular location">
    <subcellularLocation>
        <location evidence="1">Golgi apparatus</location>
        <location evidence="1">cis-Golgi network</location>
    </subcellularLocation>
    <subcellularLocation>
        <location evidence="1">Endoplasmic reticulum</location>
    </subcellularLocation>
</comment>
<comment type="similarity">
    <text evidence="3">Belongs to the TRAPP small subunits family. BET5 subfamily.</text>
</comment>
<protein>
    <recommendedName>
        <fullName>Trafficking protein particle complex subunit 1</fullName>
    </recommendedName>
</protein>
<name>TPPC1_RAT</name>
<accession>Q2KMM2</accession>
<sequence>MTVHNLYLFDRNGVCLHYSEWHRKKQAGIPKEEEYKLMYGMLFSIRSFVSKMSPLDMKDGFLSFQTSRYKLHYYETPTGIKVVMNTDLGVGPIRDVLHHIYSALYVEFVVKNPLCPLGQTVQSELFRSRLDSYVRSLPFFSARAG</sequence>
<feature type="chain" id="PRO_0000330742" description="Trafficking protein particle complex subunit 1">
    <location>
        <begin position="1"/>
        <end position="145"/>
    </location>
</feature>
<dbReference type="EMBL" id="AY903234">
    <property type="protein sequence ID" value="AAX85364.1"/>
    <property type="molecule type" value="mRNA"/>
</dbReference>
<dbReference type="EMBL" id="AY903235">
    <property type="protein sequence ID" value="AAX85365.1"/>
    <property type="molecule type" value="mRNA"/>
</dbReference>
<dbReference type="EMBL" id="AY903236">
    <property type="protein sequence ID" value="AAX85366.1"/>
    <property type="molecule type" value="mRNA"/>
</dbReference>
<dbReference type="EMBL" id="AY903237">
    <property type="protein sequence ID" value="AAX85367.1"/>
    <property type="molecule type" value="mRNA"/>
</dbReference>
<dbReference type="EMBL" id="AY903238">
    <property type="protein sequence ID" value="AAX85368.1"/>
    <property type="molecule type" value="mRNA"/>
</dbReference>
<dbReference type="RefSeq" id="NP_001034467.1">
    <property type="nucleotide sequence ID" value="NM_001039378.1"/>
</dbReference>
<dbReference type="SMR" id="Q2KMM2"/>
<dbReference type="FunCoup" id="Q2KMM2">
    <property type="interactions" value="2448"/>
</dbReference>
<dbReference type="STRING" id="10116.ENSRNOP00000075251"/>
<dbReference type="PhosphoSitePlus" id="Q2KMM2"/>
<dbReference type="PaxDb" id="10116-ENSRNOP00000053911"/>
<dbReference type="Ensembl" id="ENSRNOT00000057079.3">
    <property type="protein sequence ID" value="ENSRNOP00000053911.2"/>
    <property type="gene ID" value="ENSRNOG00000037627.5"/>
</dbReference>
<dbReference type="GeneID" id="287427"/>
<dbReference type="KEGG" id="rno:287427"/>
<dbReference type="UCSC" id="RGD:1311365">
    <property type="organism name" value="rat"/>
</dbReference>
<dbReference type="AGR" id="RGD:1311365"/>
<dbReference type="CTD" id="58485"/>
<dbReference type="RGD" id="1311365">
    <property type="gene designation" value="Trappc1"/>
</dbReference>
<dbReference type="eggNOG" id="KOG3368">
    <property type="taxonomic scope" value="Eukaryota"/>
</dbReference>
<dbReference type="GeneTree" id="ENSGT00940000153761"/>
<dbReference type="InParanoid" id="Q2KMM2"/>
<dbReference type="OMA" id="GKLMYGM"/>
<dbReference type="OrthoDB" id="246406at2759"/>
<dbReference type="PhylomeDB" id="Q2KMM2"/>
<dbReference type="TreeFam" id="TF323681"/>
<dbReference type="Reactome" id="R-RNO-204005">
    <property type="pathway name" value="COPII-mediated vesicle transport"/>
</dbReference>
<dbReference type="Reactome" id="R-RNO-6798695">
    <property type="pathway name" value="Neutrophil degranulation"/>
</dbReference>
<dbReference type="Reactome" id="R-RNO-8876198">
    <property type="pathway name" value="RAB GEFs exchange GTP for GDP on RABs"/>
</dbReference>
<dbReference type="PRO" id="PR:Q2KMM2"/>
<dbReference type="Proteomes" id="UP000002494">
    <property type="component" value="Chromosome 10"/>
</dbReference>
<dbReference type="Bgee" id="ENSRNOG00000037627">
    <property type="expression patterns" value="Expressed in cerebellum and 20 other cell types or tissues"/>
</dbReference>
<dbReference type="GO" id="GO:0005783">
    <property type="term" value="C:endoplasmic reticulum"/>
    <property type="evidence" value="ECO:0007669"/>
    <property type="project" value="UniProtKB-SubCell"/>
</dbReference>
<dbReference type="GO" id="GO:0005794">
    <property type="term" value="C:Golgi apparatus"/>
    <property type="evidence" value="ECO:0007669"/>
    <property type="project" value="UniProtKB-SubCell"/>
</dbReference>
<dbReference type="GO" id="GO:0030008">
    <property type="term" value="C:TRAPP complex"/>
    <property type="evidence" value="ECO:0000266"/>
    <property type="project" value="RGD"/>
</dbReference>
<dbReference type="GO" id="GO:0006888">
    <property type="term" value="P:endoplasmic reticulum to Golgi vesicle-mediated transport"/>
    <property type="evidence" value="ECO:0000318"/>
    <property type="project" value="GO_Central"/>
</dbReference>
<dbReference type="CDD" id="cd14855">
    <property type="entry name" value="TRAPPC1_MUM2"/>
    <property type="match status" value="1"/>
</dbReference>
<dbReference type="FunFam" id="3.30.450.70:FF:000004">
    <property type="entry name" value="Trafficking protein particle complex 1"/>
    <property type="match status" value="1"/>
</dbReference>
<dbReference type="Gene3D" id="3.30.450.70">
    <property type="match status" value="1"/>
</dbReference>
<dbReference type="InterPro" id="IPR011012">
    <property type="entry name" value="Longin-like_dom_sf"/>
</dbReference>
<dbReference type="InterPro" id="IPR007233">
    <property type="entry name" value="TRAPPC"/>
</dbReference>
<dbReference type="PANTHER" id="PTHR23249">
    <property type="entry name" value="TRAFFICKING PROTEIN PARTICLE COMPLEX SUBUNIT"/>
    <property type="match status" value="1"/>
</dbReference>
<dbReference type="PANTHER" id="PTHR23249:SF16">
    <property type="entry name" value="TRAFFICKING PROTEIN PARTICLE COMPLEX SUBUNIT 1"/>
    <property type="match status" value="1"/>
</dbReference>
<dbReference type="Pfam" id="PF04099">
    <property type="entry name" value="Sybindin"/>
    <property type="match status" value="1"/>
</dbReference>
<dbReference type="SMART" id="SM01399">
    <property type="entry name" value="Sybindin"/>
    <property type="match status" value="1"/>
</dbReference>
<dbReference type="SUPFAM" id="SSF64356">
    <property type="entry name" value="SNARE-like"/>
    <property type="match status" value="1"/>
</dbReference>
<evidence type="ECO:0000250" key="1"/>
<evidence type="ECO:0000250" key="2">
    <source>
        <dbReference type="UniProtKB" id="Q9Y5R8"/>
    </source>
</evidence>
<evidence type="ECO:0000305" key="3"/>
<evidence type="ECO:0000312" key="4">
    <source>
        <dbReference type="RGD" id="1311365"/>
    </source>
</evidence>
<proteinExistence type="evidence at transcript level"/>
<gene>
    <name evidence="4" type="primary">Trappc1</name>
</gene>